<proteinExistence type="inferred from homology"/>
<accession>A8W3F5</accession>
<name>RK36_CUSEX</name>
<geneLocation type="plastid"/>
<evidence type="ECO:0000255" key="1">
    <source>
        <dbReference type="HAMAP-Rule" id="MF_00251"/>
    </source>
</evidence>
<evidence type="ECO:0000305" key="2"/>
<protein>
    <recommendedName>
        <fullName evidence="2">Large ribosomal subunit protein bL36c</fullName>
    </recommendedName>
    <alternativeName>
        <fullName>Plastid 50S ribosomal protein L36</fullName>
    </alternativeName>
</protein>
<sequence length="37" mass="4522">MKIRASVRQICDKCRLIRRRGRILVICYNPRHKQRQG</sequence>
<keyword id="KW-0934">Plastid</keyword>
<keyword id="KW-0687">Ribonucleoprotein</keyword>
<keyword id="KW-0689">Ribosomal protein</keyword>
<organism>
    <name type="scientific">Cuscuta exaltata</name>
    <name type="common">Tall dodder</name>
    <dbReference type="NCBI Taxonomy" id="476139"/>
    <lineage>
        <taxon>Eukaryota</taxon>
        <taxon>Viridiplantae</taxon>
        <taxon>Streptophyta</taxon>
        <taxon>Embryophyta</taxon>
        <taxon>Tracheophyta</taxon>
        <taxon>Spermatophyta</taxon>
        <taxon>Magnoliopsida</taxon>
        <taxon>eudicotyledons</taxon>
        <taxon>Gunneridae</taxon>
        <taxon>Pentapetalae</taxon>
        <taxon>asterids</taxon>
        <taxon>lamiids</taxon>
        <taxon>Solanales</taxon>
        <taxon>Convolvulaceae</taxon>
        <taxon>Cuscuteae</taxon>
        <taxon>Cuscuta</taxon>
        <taxon>Cuscuta subgen. Monogynella</taxon>
    </lineage>
</organism>
<dbReference type="EMBL" id="EU189132">
    <property type="protein sequence ID" value="ABW83726.1"/>
    <property type="molecule type" value="Genomic_DNA"/>
</dbReference>
<dbReference type="RefSeq" id="YP_001542562.1">
    <property type="nucleotide sequence ID" value="NC_009963.1"/>
</dbReference>
<dbReference type="SMR" id="A8W3F5"/>
<dbReference type="GeneID" id="5729624"/>
<dbReference type="GO" id="GO:0009536">
    <property type="term" value="C:plastid"/>
    <property type="evidence" value="ECO:0007669"/>
    <property type="project" value="UniProtKB-SubCell"/>
</dbReference>
<dbReference type="GO" id="GO:1990904">
    <property type="term" value="C:ribonucleoprotein complex"/>
    <property type="evidence" value="ECO:0007669"/>
    <property type="project" value="UniProtKB-KW"/>
</dbReference>
<dbReference type="GO" id="GO:0005840">
    <property type="term" value="C:ribosome"/>
    <property type="evidence" value="ECO:0007669"/>
    <property type="project" value="UniProtKB-KW"/>
</dbReference>
<dbReference type="GO" id="GO:0003735">
    <property type="term" value="F:structural constituent of ribosome"/>
    <property type="evidence" value="ECO:0007669"/>
    <property type="project" value="InterPro"/>
</dbReference>
<dbReference type="GO" id="GO:0006412">
    <property type="term" value="P:translation"/>
    <property type="evidence" value="ECO:0007669"/>
    <property type="project" value="InterPro"/>
</dbReference>
<dbReference type="HAMAP" id="MF_00251">
    <property type="entry name" value="Ribosomal_bL36"/>
    <property type="match status" value="1"/>
</dbReference>
<dbReference type="InterPro" id="IPR000473">
    <property type="entry name" value="Ribosomal_bL36"/>
</dbReference>
<dbReference type="InterPro" id="IPR035977">
    <property type="entry name" value="Ribosomal_bL36_sp"/>
</dbReference>
<dbReference type="NCBIfam" id="TIGR01022">
    <property type="entry name" value="rpmJ_bact"/>
    <property type="match status" value="1"/>
</dbReference>
<dbReference type="PANTHER" id="PTHR42888">
    <property type="entry name" value="50S RIBOSOMAL PROTEIN L36, CHLOROPLASTIC"/>
    <property type="match status" value="1"/>
</dbReference>
<dbReference type="PANTHER" id="PTHR42888:SF1">
    <property type="entry name" value="LARGE RIBOSOMAL SUBUNIT PROTEIN BL36C"/>
    <property type="match status" value="1"/>
</dbReference>
<dbReference type="Pfam" id="PF00444">
    <property type="entry name" value="Ribosomal_L36"/>
    <property type="match status" value="1"/>
</dbReference>
<dbReference type="SUPFAM" id="SSF57840">
    <property type="entry name" value="Ribosomal protein L36"/>
    <property type="match status" value="1"/>
</dbReference>
<dbReference type="PROSITE" id="PS00828">
    <property type="entry name" value="RIBOSOMAL_L36"/>
    <property type="match status" value="1"/>
</dbReference>
<comment type="subcellular location">
    <subcellularLocation>
        <location>Plastid</location>
    </subcellularLocation>
</comment>
<comment type="similarity">
    <text evidence="1">Belongs to the bacterial ribosomal protein bL36 family.</text>
</comment>
<feature type="chain" id="PRO_0000344753" description="Large ribosomal subunit protein bL36c">
    <location>
        <begin position="1"/>
        <end position="37"/>
    </location>
</feature>
<reference key="1">
    <citation type="journal article" date="2007" name="BMC Plant Biol.">
        <title>Complete plastid genome sequences suggest strong selection for retention of photosynthetic genes in the parasitic plant genus Cuscuta.</title>
        <authorList>
            <person name="McNeal J.R."/>
            <person name="Kuehl J.V."/>
            <person name="Boore J.L."/>
            <person name="dePamphilis C.W."/>
        </authorList>
    </citation>
    <scope>NUCLEOTIDE SEQUENCE [LARGE SCALE GENOMIC DNA]</scope>
</reference>
<gene>
    <name evidence="1" type="primary">rpl36</name>
</gene>